<evidence type="ECO:0000250" key="1">
    <source>
        <dbReference type="UniProtKB" id="Q89768"/>
    </source>
</evidence>
<evidence type="ECO:0000305" key="2"/>
<comment type="function">
    <text evidence="1">Plays a role in virus cell tropism, and may be required for efficient virus replication in macrophages.</text>
</comment>
<comment type="induction">
    <text evidence="2">Expressed in the early phase of the viral replicative cycle.</text>
</comment>
<comment type="similarity">
    <text evidence="2">Belongs to the asfivirus MGF 505 family.</text>
</comment>
<proteinExistence type="inferred from homology"/>
<dbReference type="EMBL" id="AY261363">
    <property type="status" value="NOT_ANNOTATED_CDS"/>
    <property type="molecule type" value="Genomic_DNA"/>
</dbReference>
<dbReference type="SMR" id="P0C9T4"/>
<dbReference type="Proteomes" id="UP000000859">
    <property type="component" value="Segment"/>
</dbReference>
<dbReference type="InterPro" id="IPR004858">
    <property type="entry name" value="MGF_505"/>
</dbReference>
<dbReference type="Pfam" id="PF03158">
    <property type="entry name" value="DUF249"/>
    <property type="match status" value="1"/>
</dbReference>
<feature type="chain" id="PRO_0000373330" description="Protein MGF 505-4R">
    <location>
        <begin position="1"/>
        <end position="501"/>
    </location>
</feature>
<organism>
    <name type="scientific">African swine fever virus (isolate Tick/South Africa/Pretoriuskop Pr4/1996)</name>
    <name type="common">ASFV</name>
    <dbReference type="NCBI Taxonomy" id="561443"/>
    <lineage>
        <taxon>Viruses</taxon>
        <taxon>Varidnaviria</taxon>
        <taxon>Bamfordvirae</taxon>
        <taxon>Nucleocytoviricota</taxon>
        <taxon>Pokkesviricetes</taxon>
        <taxon>Asfuvirales</taxon>
        <taxon>Asfarviridae</taxon>
        <taxon>Asfivirus</taxon>
        <taxon>African swine fever virus</taxon>
    </lineage>
</organism>
<gene>
    <name type="ordered locus">Pret-040</name>
</gene>
<organismHost>
    <name type="scientific">Ornithodoros</name>
    <name type="common">relapsing fever ticks</name>
    <dbReference type="NCBI Taxonomy" id="6937"/>
</organismHost>
<organismHost>
    <name type="scientific">Phacochoerus aethiopicus</name>
    <name type="common">Warthog</name>
    <dbReference type="NCBI Taxonomy" id="85517"/>
</organismHost>
<organismHost>
    <name type="scientific">Phacochoerus africanus</name>
    <name type="common">Warthog</name>
    <dbReference type="NCBI Taxonomy" id="41426"/>
</organismHost>
<organismHost>
    <name type="scientific">Potamochoerus larvatus</name>
    <name type="common">Bushpig</name>
    <dbReference type="NCBI Taxonomy" id="273792"/>
</organismHost>
<organismHost>
    <name type="scientific">Sus scrofa</name>
    <name type="common">Pig</name>
    <dbReference type="NCBI Taxonomy" id="9823"/>
</organismHost>
<protein>
    <recommendedName>
        <fullName>Protein MGF 505-4R</fullName>
    </recommendedName>
</protein>
<sequence length="501" mass="58669">MFSLQDICRKHLFQVPDAFDEYILQALGLYWEKHGSLQRIRKDAVFVQRNLTISTNEALRIAASEGNERVINLLLSWEGNFHYVIIGALEGNRYDLIHKYGSQIKDYHMILSSIQNANTFEKCHELSNCDMWCLIDNAIKYNMLSILQKHRNFLTEELENQEFFETACEEQKYDIVLWMGQTLLLDEPKFIFDTAFKMVDFSLLTIGYSLLFDNKMDIQDDLTSLLTEHLEIAAAKGQLYFMLETLKHGGDVNFEVLSKAVENDHRKILDYFIRRQQYLSREDIENLLLSAITNCASKKTLNLLLSYLNYSIKNITEKIVQHVIKGGDYTIIILLKKKKINLVEPVLTGFIDHYYGNCFIENFIREFAIRPEKVIKMAARKGKLNMIIEFLNEKYVHKDDLGTIFKLLKNLVCTMKHKKGKETLLILIHEIYRAIHLDTKEKFKLLRFYVMHDATIQFLSMCKDCFNLAGFKPFVLECLDIAIKKNHPNMIENIEILSKYE</sequence>
<reference key="1">
    <citation type="submission" date="2003-03" db="EMBL/GenBank/DDBJ databases">
        <title>African swine fever virus genomes.</title>
        <authorList>
            <person name="Kutish G.F."/>
            <person name="Rock D.L."/>
        </authorList>
    </citation>
    <scope>NUCLEOTIDE SEQUENCE [LARGE SCALE GENOMIC DNA]</scope>
</reference>
<name>5054R_ASFP4</name>
<accession>P0C9T4</accession>
<keyword id="KW-0244">Early protein</keyword>